<gene>
    <name type="primary">cox1/2</name>
</gene>
<dbReference type="EC" id="7.1.1.9"/>
<dbReference type="EMBL" id="DQ336395">
    <property type="protein sequence ID" value="ABC60387.1"/>
    <property type="molecule type" value="Genomic_DNA"/>
</dbReference>
<dbReference type="RefSeq" id="YP_492636.2">
    <property type="nucleotide sequence ID" value="NC_007787.2"/>
</dbReference>
<dbReference type="SMR" id="Q2LCQ6"/>
<dbReference type="GeneID" id="3912629"/>
<dbReference type="UniPathway" id="UPA00705"/>
<dbReference type="GO" id="GO:0005743">
    <property type="term" value="C:mitochondrial inner membrane"/>
    <property type="evidence" value="ECO:0007669"/>
    <property type="project" value="UniProtKB-SubCell"/>
</dbReference>
<dbReference type="GO" id="GO:0045277">
    <property type="term" value="C:respiratory chain complex IV"/>
    <property type="evidence" value="ECO:0007669"/>
    <property type="project" value="InterPro"/>
</dbReference>
<dbReference type="GO" id="GO:0005507">
    <property type="term" value="F:copper ion binding"/>
    <property type="evidence" value="ECO:0007669"/>
    <property type="project" value="InterPro"/>
</dbReference>
<dbReference type="GO" id="GO:0004129">
    <property type="term" value="F:cytochrome-c oxidase activity"/>
    <property type="evidence" value="ECO:0007669"/>
    <property type="project" value="UniProtKB-EC"/>
</dbReference>
<dbReference type="GO" id="GO:0020037">
    <property type="term" value="F:heme binding"/>
    <property type="evidence" value="ECO:0007669"/>
    <property type="project" value="InterPro"/>
</dbReference>
<dbReference type="GO" id="GO:0015990">
    <property type="term" value="P:electron transport coupled proton transport"/>
    <property type="evidence" value="ECO:0007669"/>
    <property type="project" value="TreeGrafter"/>
</dbReference>
<dbReference type="GO" id="GO:0006123">
    <property type="term" value="P:mitochondrial electron transport, cytochrome c to oxygen"/>
    <property type="evidence" value="ECO:0007669"/>
    <property type="project" value="TreeGrafter"/>
</dbReference>
<dbReference type="CDD" id="cd13912">
    <property type="entry name" value="CcO_II_C"/>
    <property type="match status" value="1"/>
</dbReference>
<dbReference type="CDD" id="cd01663">
    <property type="entry name" value="Cyt_c_Oxidase_I"/>
    <property type="match status" value="1"/>
</dbReference>
<dbReference type="FunFam" id="1.10.287.90:FF:000004">
    <property type="entry name" value="Cytochrome c oxidase subunit 2"/>
    <property type="match status" value="1"/>
</dbReference>
<dbReference type="FunFam" id="2.60.40.420:FF:000001">
    <property type="entry name" value="Cytochrome c oxidase subunit 2"/>
    <property type="match status" value="1"/>
</dbReference>
<dbReference type="Gene3D" id="1.10.287.90">
    <property type="match status" value="1"/>
</dbReference>
<dbReference type="Gene3D" id="2.60.40.420">
    <property type="entry name" value="Cupredoxins - blue copper proteins"/>
    <property type="match status" value="1"/>
</dbReference>
<dbReference type="Gene3D" id="1.20.210.10">
    <property type="entry name" value="Cytochrome c oxidase-like, subunit I domain"/>
    <property type="match status" value="1"/>
</dbReference>
<dbReference type="InterPro" id="IPR002429">
    <property type="entry name" value="CcO_II-like_C"/>
</dbReference>
<dbReference type="InterPro" id="IPR034210">
    <property type="entry name" value="CcO_II_C"/>
</dbReference>
<dbReference type="InterPro" id="IPR001505">
    <property type="entry name" value="Copper_CuA"/>
</dbReference>
<dbReference type="InterPro" id="IPR008972">
    <property type="entry name" value="Cupredoxin"/>
</dbReference>
<dbReference type="InterPro" id="IPR023616">
    <property type="entry name" value="Cyt_c_oxase-like_su1_dom"/>
</dbReference>
<dbReference type="InterPro" id="IPR036927">
    <property type="entry name" value="Cyt_c_oxase-like_su1_sf"/>
</dbReference>
<dbReference type="InterPro" id="IPR000883">
    <property type="entry name" value="Cyt_C_Oxase_1"/>
</dbReference>
<dbReference type="InterPro" id="IPR033944">
    <property type="entry name" value="Cyt_c_oxase_su1_dom"/>
</dbReference>
<dbReference type="InterPro" id="IPR014222">
    <property type="entry name" value="Cyt_c_oxidase_su2"/>
</dbReference>
<dbReference type="InterPro" id="IPR011759">
    <property type="entry name" value="Cyt_c_oxidase_su2_TM_dom"/>
</dbReference>
<dbReference type="InterPro" id="IPR036257">
    <property type="entry name" value="Cyt_c_oxidase_su2_TM_sf"/>
</dbReference>
<dbReference type="NCBIfam" id="TIGR02866">
    <property type="entry name" value="CoxB"/>
    <property type="match status" value="1"/>
</dbReference>
<dbReference type="PANTHER" id="PTHR10422">
    <property type="entry name" value="CYTOCHROME C OXIDASE SUBUNIT 1"/>
    <property type="match status" value="1"/>
</dbReference>
<dbReference type="PANTHER" id="PTHR10422:SF18">
    <property type="entry name" value="CYTOCHROME C OXIDASE SUBUNIT 1"/>
    <property type="match status" value="1"/>
</dbReference>
<dbReference type="Pfam" id="PF00115">
    <property type="entry name" value="COX1"/>
    <property type="match status" value="1"/>
</dbReference>
<dbReference type="Pfam" id="PF00116">
    <property type="entry name" value="COX2"/>
    <property type="match status" value="1"/>
</dbReference>
<dbReference type="Pfam" id="PF02790">
    <property type="entry name" value="COX2_TM"/>
    <property type="match status" value="1"/>
</dbReference>
<dbReference type="PRINTS" id="PR01165">
    <property type="entry name" value="CYCOXIDASEI"/>
</dbReference>
<dbReference type="SUPFAM" id="SSF49503">
    <property type="entry name" value="Cupredoxins"/>
    <property type="match status" value="1"/>
</dbReference>
<dbReference type="SUPFAM" id="SSF81442">
    <property type="entry name" value="Cytochrome c oxidase subunit I-like"/>
    <property type="match status" value="1"/>
</dbReference>
<dbReference type="SUPFAM" id="SSF81464">
    <property type="entry name" value="Cytochrome c oxidase subunit II-like, transmembrane region"/>
    <property type="match status" value="1"/>
</dbReference>
<dbReference type="PROSITE" id="PS50855">
    <property type="entry name" value="COX1"/>
    <property type="match status" value="1"/>
</dbReference>
<dbReference type="PROSITE" id="PS00078">
    <property type="entry name" value="COX2"/>
    <property type="match status" value="1"/>
</dbReference>
<dbReference type="PROSITE" id="PS50857">
    <property type="entry name" value="COX2_CUA"/>
    <property type="match status" value="1"/>
</dbReference>
<dbReference type="PROSITE" id="PS50999">
    <property type="entry name" value="COX2_TM"/>
    <property type="match status" value="1"/>
</dbReference>
<organism>
    <name type="scientific">Dictyostelium citrinum</name>
    <name type="common">Slime mold</name>
    <dbReference type="NCBI Taxonomy" id="361072"/>
    <lineage>
        <taxon>Eukaryota</taxon>
        <taxon>Amoebozoa</taxon>
        <taxon>Evosea</taxon>
        <taxon>Eumycetozoa</taxon>
        <taxon>Dictyostelia</taxon>
        <taxon>Dictyosteliales</taxon>
        <taxon>Dictyosteliaceae</taxon>
        <taxon>Dictyostelium</taxon>
    </lineage>
</organism>
<accession>Q2LCQ6</accession>
<name>COX1_DICCI</name>
<comment type="function">
    <text evidence="3">Component of the cytochrome c oxidase, the last enzyme in the mitochondrial electron transport chain which drives oxidative phosphorylation. The respiratory chain contains 3 multisubunit complexes succinate dehydrogenase (complex II, CII), ubiquinol-cytochrome c oxidoreductase (cytochrome b-c1 complex, complex III, CIII) and cytochrome c oxidase (complex IV, CIV), that cooperate to transfer electrons derived from NADH and succinate to molecular oxygen, creating an electrochemical gradient over the inner membrane that drives transmembrane transport and the ATP synthase. Cytochrome c oxidase is the component of the respiratory chain that catalyzes the reduction of oxygen to water. Electrons originating from reduced cytochrome c in the intermembrane space (IMS) are transferred via the dinuclear copper A center (CU(A)) of subunit 2 and heme A of subunit 1 to the active site in subunit 1, a binuclear center (BNC) formed by heme A3 and copper B (CU(B)). The BNC reduces molecular oxygen to 2 water molecules using 4 electrons from cytochrome c in the IMS and 4 protons from the mitochondrial matrix.</text>
</comment>
<comment type="catalytic activity">
    <reaction evidence="3">
        <text>4 Fe(II)-[cytochrome c] + O2 + 8 H(+)(in) = 4 Fe(III)-[cytochrome c] + 2 H2O + 4 H(+)(out)</text>
        <dbReference type="Rhea" id="RHEA:11436"/>
        <dbReference type="Rhea" id="RHEA-COMP:10350"/>
        <dbReference type="Rhea" id="RHEA-COMP:14399"/>
        <dbReference type="ChEBI" id="CHEBI:15377"/>
        <dbReference type="ChEBI" id="CHEBI:15378"/>
        <dbReference type="ChEBI" id="CHEBI:15379"/>
        <dbReference type="ChEBI" id="CHEBI:29033"/>
        <dbReference type="ChEBI" id="CHEBI:29034"/>
        <dbReference type="EC" id="7.1.1.9"/>
    </reaction>
    <physiologicalReaction direction="left-to-right" evidence="3">
        <dbReference type="Rhea" id="RHEA:11437"/>
    </physiologicalReaction>
</comment>
<comment type="cofactor">
    <cofactor evidence="3">
        <name>heme</name>
        <dbReference type="ChEBI" id="CHEBI:30413"/>
    </cofactor>
    <text evidence="3">Binds 2 heme A groups non-covalently per subunit.</text>
</comment>
<comment type="cofactor">
    <cofactor evidence="3">
        <name>Cu cation</name>
        <dbReference type="ChEBI" id="CHEBI:23378"/>
    </cofactor>
    <text evidence="3">Binds a copper B center.</text>
</comment>
<comment type="pathway">
    <text evidence="3">Energy metabolism; oxidative phosphorylation.</text>
</comment>
<comment type="subunit">
    <text evidence="3">Component of the cytochrome c oxidase (complex IV, CIV), a multisubunit enzyme composed of a catalytic core of 3 subunits and several supernumerary subunits. The complex exists as a monomer or a dimer and forms supercomplexes (SCs) in the inner mitochondrial membrane with ubiquinol-cytochrome c oxidoreductase (cytochrome b-c1 complex, complex III, CIII).</text>
</comment>
<comment type="subcellular location">
    <subcellularLocation>
        <location evidence="3">Mitochondrion inner membrane</location>
        <topology evidence="3">Multi-pass membrane protein</topology>
    </subcellularLocation>
</comment>
<comment type="similarity">
    <text evidence="5">In the N-terminal section; belongs to the heme-copper respiratory oxidase family.</text>
</comment>
<comment type="similarity">
    <text evidence="5">In the C-terminal section; belongs to the cytochrome c oxidase subunit 2 family.</text>
</comment>
<geneLocation type="mitochondrion"/>
<sequence>MKLLEIYDKQLVEQEEGGFRAILTRYLNKWIFTVDHKLIGTMYITFSIFAGIIGTLLSLVIPMELSTGNMLEGDSQQYNVIVTAHGLIMIFFVVMYCSMPAMLGGFANWFLPIMVGAPDVAFPRLNNISLWLIVVSFGLLLTSSCVGIGAGTGWTVYPPLSMMEYHPGHAVDVGILSLHIAGASSLVGAINFLTTVFNMKIAGLSWPKVSLFVWSVVITAVLLVLSLPVLAGGLTMLITDRNFETTFFDPIGGGDPILYQHLFHPEVYILILPGFGIISIIISRYSNKGIFGVKGMISAMSAIGFLGFLVWAYHHMYTVGLDVDTRAYFTAATMIIAIPTGIKIFSWLATLWGGVIKITTPMLFVIGFLVLFTIGGLTGVVLANGGLDISLHDTYYVVAHFHYVLSMGAIFAIFAGYYYYYAIMNSNRILGIVRYNEQLGRIHFWTMFIGVNVTFFPMHFLGLAGMPRRIGDYPDAYIGWNLIASYGSLITAFGLLFFFVNIFTPYFKKKALISKKFQRGAMILMGLDFSRDWQIGFQDPATPIMEGIIDLHNYIFFYLIVVAVFIGWVMGRILWRFAYKWSYPTIGDIEIFKNFTAYNQIIHGTVIEIVWTLIPTVILYLIAIPSFTLLYAMDEIINPTVTIKIIGHQWYWSYEYGDNSSNLVEFDSYMVYERDLNEGQLRLLEVDNSMIVPVKTHIRLIITSGDVLHSWAVPSFGIKVDAVPGRLNQIGLYVKREGTFYGQCSELCGVDHGFMPIKVEAVKVQEYLGRLYK</sequence>
<feature type="chain" id="PRO_0000312386" description="Cytochrome c oxidase subunit 1+2">
    <location>
        <begin position="1"/>
        <end position="773"/>
    </location>
</feature>
<feature type="transmembrane region" description="Helical" evidence="4">
    <location>
        <begin position="41"/>
        <end position="61"/>
    </location>
</feature>
<feature type="transmembrane region" description="Helical" evidence="4">
    <location>
        <begin position="87"/>
        <end position="111"/>
    </location>
</feature>
<feature type="transmembrane region" description="Helical" evidence="4">
    <location>
        <begin position="130"/>
        <end position="150"/>
    </location>
</feature>
<feature type="transmembrane region" description="Helical" evidence="4">
    <location>
        <begin position="173"/>
        <end position="193"/>
    </location>
</feature>
<feature type="transmembrane region" description="Helical" evidence="4">
    <location>
        <begin position="211"/>
        <end position="231"/>
    </location>
</feature>
<feature type="transmembrane region" description="Helical" evidence="4">
    <location>
        <begin position="262"/>
        <end position="278"/>
    </location>
</feature>
<feature type="transmembrane region" description="Helical" evidence="4">
    <location>
        <begin position="290"/>
        <end position="310"/>
    </location>
</feature>
<feature type="transmembrane region" description="Helical" evidence="4">
    <location>
        <begin position="335"/>
        <end position="355"/>
    </location>
</feature>
<feature type="transmembrane region" description="Helical" evidence="4">
    <location>
        <begin position="362"/>
        <end position="382"/>
    </location>
</feature>
<feature type="transmembrane region" description="Helical" evidence="4">
    <location>
        <begin position="396"/>
        <end position="416"/>
    </location>
</feature>
<feature type="transmembrane region" description="Helical" evidence="4">
    <location>
        <begin position="444"/>
        <end position="464"/>
    </location>
</feature>
<feature type="transmembrane region" description="Helical" evidence="4">
    <location>
        <begin position="483"/>
        <end position="503"/>
    </location>
</feature>
<feature type="transmembrane region" description="Helical" evidence="4">
    <location>
        <begin position="555"/>
        <end position="575"/>
    </location>
</feature>
<feature type="transmembrane region" description="Helical" evidence="4">
    <location>
        <begin position="604"/>
        <end position="624"/>
    </location>
</feature>
<feature type="region of interest" description="COX1">
    <location>
        <begin position="1"/>
        <end position="491"/>
    </location>
</feature>
<feature type="region of interest" description="COX2">
    <location>
        <begin position="492"/>
        <end position="773"/>
    </location>
</feature>
<feature type="binding site" evidence="3">
    <location>
        <position position="64"/>
    </location>
    <ligand>
        <name>Ca(2+)</name>
        <dbReference type="ChEBI" id="CHEBI:29108"/>
    </ligand>
</feature>
<feature type="binding site" description="axial binding residue" evidence="3">
    <location>
        <position position="85"/>
    </location>
    <ligand>
        <name>Fe(II)-heme a</name>
        <dbReference type="ChEBI" id="CHEBI:61715"/>
        <note>low-spin</note>
    </ligand>
    <ligandPart>
        <name>Fe</name>
        <dbReference type="ChEBI" id="CHEBI:18248"/>
    </ligandPart>
</feature>
<feature type="binding site" evidence="3">
    <location>
        <position position="264"/>
    </location>
    <ligand>
        <name>Cu cation</name>
        <dbReference type="ChEBI" id="CHEBI:23378"/>
        <label>B</label>
    </ligand>
</feature>
<feature type="binding site" evidence="2">
    <location>
        <position position="268"/>
    </location>
    <ligand>
        <name>O2</name>
        <dbReference type="ChEBI" id="CHEBI:15379"/>
    </ligand>
</feature>
<feature type="binding site" evidence="3">
    <location>
        <position position="314"/>
    </location>
    <ligand>
        <name>Cu cation</name>
        <dbReference type="ChEBI" id="CHEBI:23378"/>
        <label>B</label>
    </ligand>
</feature>
<feature type="binding site" evidence="3">
    <location>
        <position position="315"/>
    </location>
    <ligand>
        <name>Cu cation</name>
        <dbReference type="ChEBI" id="CHEBI:23378"/>
        <label>B</label>
    </ligand>
</feature>
<feature type="binding site" evidence="3">
    <location>
        <position position="392"/>
    </location>
    <ligand>
        <name>Mg(2+)</name>
        <dbReference type="ChEBI" id="CHEBI:18420"/>
        <note>ligand shared with subunit 2</note>
    </ligand>
</feature>
<feature type="binding site" evidence="3">
    <location>
        <position position="393"/>
    </location>
    <ligand>
        <name>Mg(2+)</name>
        <dbReference type="ChEBI" id="CHEBI:18420"/>
        <note>ligand shared with subunit 2</note>
    </ligand>
</feature>
<feature type="binding site" description="axial binding residue" evidence="3">
    <location>
        <position position="400"/>
    </location>
    <ligand>
        <name>heme a3</name>
        <dbReference type="ChEBI" id="CHEBI:83282"/>
        <note>high-spin</note>
    </ligand>
    <ligandPart>
        <name>Fe</name>
        <dbReference type="ChEBI" id="CHEBI:18248"/>
    </ligandPart>
</feature>
<feature type="binding site" description="axial binding residue" evidence="3">
    <location>
        <position position="402"/>
    </location>
    <ligand>
        <name>Fe(II)-heme a</name>
        <dbReference type="ChEBI" id="CHEBI:61715"/>
        <note>low-spin</note>
    </ligand>
    <ligandPart>
        <name>Fe</name>
        <dbReference type="ChEBI" id="CHEBI:18248"/>
    </ligandPart>
</feature>
<feature type="binding site" evidence="1">
    <location>
        <position position="709"/>
    </location>
    <ligand>
        <name>Cu cation</name>
        <dbReference type="ChEBI" id="CHEBI:23378"/>
        <label>A</label>
    </ligand>
</feature>
<feature type="binding site" evidence="1">
    <location>
        <position position="744"/>
    </location>
    <ligand>
        <name>Cu cation</name>
        <dbReference type="ChEBI" id="CHEBI:23378"/>
        <label>A</label>
    </ligand>
</feature>
<feature type="binding site" evidence="1">
    <location>
        <position position="748"/>
    </location>
    <ligand>
        <name>Cu cation</name>
        <dbReference type="ChEBI" id="CHEBI:23378"/>
        <label>A</label>
    </ligand>
</feature>
<feature type="binding site" evidence="1">
    <location>
        <position position="752"/>
    </location>
    <ligand>
        <name>Cu cation</name>
        <dbReference type="ChEBI" id="CHEBI:23378"/>
        <label>A</label>
    </ligand>
</feature>
<feature type="cross-link" description="1'-histidyl-3'-tyrosine (His-Tyr)" evidence="3">
    <location>
        <begin position="264"/>
        <end position="268"/>
    </location>
</feature>
<evidence type="ECO:0000250" key="1"/>
<evidence type="ECO:0000250" key="2">
    <source>
        <dbReference type="UniProtKB" id="P00396"/>
    </source>
</evidence>
<evidence type="ECO:0000250" key="3">
    <source>
        <dbReference type="UniProtKB" id="P00401"/>
    </source>
</evidence>
<evidence type="ECO:0000255" key="4"/>
<evidence type="ECO:0000305" key="5"/>
<keyword id="KW-0106">Calcium</keyword>
<keyword id="KW-0186">Copper</keyword>
<keyword id="KW-0249">Electron transport</keyword>
<keyword id="KW-0349">Heme</keyword>
<keyword id="KW-0408">Iron</keyword>
<keyword id="KW-0460">Magnesium</keyword>
<keyword id="KW-0472">Membrane</keyword>
<keyword id="KW-0479">Metal-binding</keyword>
<keyword id="KW-0496">Mitochondrion</keyword>
<keyword id="KW-0999">Mitochondrion inner membrane</keyword>
<keyword id="KW-0679">Respiratory chain</keyword>
<keyword id="KW-1278">Translocase</keyword>
<keyword id="KW-0812">Transmembrane</keyword>
<keyword id="KW-1133">Transmembrane helix</keyword>
<keyword id="KW-0813">Transport</keyword>
<reference key="1">
    <citation type="journal article" date="2008" name="Mol. Biol. Evol.">
        <title>Mitochondrial genome evolution in the social amoebae.</title>
        <authorList>
            <person name="Heidel A.J."/>
            <person name="Gloeckner G."/>
        </authorList>
    </citation>
    <scope>NUCLEOTIDE SEQUENCE [LARGE SCALE GENOMIC DNA]</scope>
</reference>
<protein>
    <recommendedName>
        <fullName>Cytochrome c oxidase subunit 1+2</fullName>
        <ecNumber>7.1.1.9</ecNumber>
    </recommendedName>
    <alternativeName>
        <fullName>Cytochrome c oxidase polypeptide I+II</fullName>
    </alternativeName>
</protein>
<proteinExistence type="inferred from homology"/>